<reference key="1">
    <citation type="journal article" date="2001" name="Science">
        <title>Comparative genomics of Listeria species.</title>
        <authorList>
            <person name="Glaser P."/>
            <person name="Frangeul L."/>
            <person name="Buchrieser C."/>
            <person name="Rusniok C."/>
            <person name="Amend A."/>
            <person name="Baquero F."/>
            <person name="Berche P."/>
            <person name="Bloecker H."/>
            <person name="Brandt P."/>
            <person name="Chakraborty T."/>
            <person name="Charbit A."/>
            <person name="Chetouani F."/>
            <person name="Couve E."/>
            <person name="de Daruvar A."/>
            <person name="Dehoux P."/>
            <person name="Domann E."/>
            <person name="Dominguez-Bernal G."/>
            <person name="Duchaud E."/>
            <person name="Durant L."/>
            <person name="Dussurget O."/>
            <person name="Entian K.-D."/>
            <person name="Fsihi H."/>
            <person name="Garcia-del Portillo F."/>
            <person name="Garrido P."/>
            <person name="Gautier L."/>
            <person name="Goebel W."/>
            <person name="Gomez-Lopez N."/>
            <person name="Hain T."/>
            <person name="Hauf J."/>
            <person name="Jackson D."/>
            <person name="Jones L.-M."/>
            <person name="Kaerst U."/>
            <person name="Kreft J."/>
            <person name="Kuhn M."/>
            <person name="Kunst F."/>
            <person name="Kurapkat G."/>
            <person name="Madueno E."/>
            <person name="Maitournam A."/>
            <person name="Mata Vicente J."/>
            <person name="Ng E."/>
            <person name="Nedjari H."/>
            <person name="Nordsiek G."/>
            <person name="Novella S."/>
            <person name="de Pablos B."/>
            <person name="Perez-Diaz J.-C."/>
            <person name="Purcell R."/>
            <person name="Remmel B."/>
            <person name="Rose M."/>
            <person name="Schlueter T."/>
            <person name="Simoes N."/>
            <person name="Tierrez A."/>
            <person name="Vazquez-Boland J.-A."/>
            <person name="Voss H."/>
            <person name="Wehland J."/>
            <person name="Cossart P."/>
        </authorList>
    </citation>
    <scope>NUCLEOTIDE SEQUENCE [LARGE SCALE GENOMIC DNA]</scope>
    <source>
        <strain>ATCC BAA-680 / CLIP 11262</strain>
    </source>
</reference>
<keyword id="KW-1003">Cell membrane</keyword>
<keyword id="KW-0444">Lipid biosynthesis</keyword>
<keyword id="KW-0443">Lipid metabolism</keyword>
<keyword id="KW-0472">Membrane</keyword>
<keyword id="KW-0594">Phospholipid biosynthesis</keyword>
<keyword id="KW-1208">Phospholipid metabolism</keyword>
<keyword id="KW-0677">Repeat</keyword>
<keyword id="KW-0808">Transferase</keyword>
<keyword id="KW-0812">Transmembrane</keyword>
<keyword id="KW-1133">Transmembrane helix</keyword>
<proteinExistence type="inferred from homology"/>
<dbReference type="EC" id="2.7.8.-" evidence="1"/>
<dbReference type="EMBL" id="AL596173">
    <property type="protein sequence ID" value="CAC97873.1"/>
    <property type="molecule type" value="Genomic_DNA"/>
</dbReference>
<dbReference type="PIR" id="AI1762">
    <property type="entry name" value="AI1762"/>
</dbReference>
<dbReference type="RefSeq" id="WP_003768327.1">
    <property type="nucleotide sequence ID" value="NC_003212.1"/>
</dbReference>
<dbReference type="SMR" id="Q927Z0"/>
<dbReference type="STRING" id="272626.gene:17567027"/>
<dbReference type="DNASU" id="1131482"/>
<dbReference type="GeneID" id="93235910"/>
<dbReference type="KEGG" id="lin:lin2646"/>
<dbReference type="eggNOG" id="COG1502">
    <property type="taxonomic scope" value="Bacteria"/>
</dbReference>
<dbReference type="HOGENOM" id="CLU_038053_1_1_9"/>
<dbReference type="OrthoDB" id="9762009at2"/>
<dbReference type="Proteomes" id="UP000002513">
    <property type="component" value="Chromosome"/>
</dbReference>
<dbReference type="GO" id="GO:0005886">
    <property type="term" value="C:plasma membrane"/>
    <property type="evidence" value="ECO:0007669"/>
    <property type="project" value="UniProtKB-SubCell"/>
</dbReference>
<dbReference type="GO" id="GO:0008808">
    <property type="term" value="F:cardiolipin synthase activity"/>
    <property type="evidence" value="ECO:0007669"/>
    <property type="project" value="InterPro"/>
</dbReference>
<dbReference type="GO" id="GO:0032049">
    <property type="term" value="P:cardiolipin biosynthetic process"/>
    <property type="evidence" value="ECO:0007669"/>
    <property type="project" value="InterPro"/>
</dbReference>
<dbReference type="CDD" id="cd09110">
    <property type="entry name" value="PLDc_CLS_1"/>
    <property type="match status" value="1"/>
</dbReference>
<dbReference type="CDD" id="cd09112">
    <property type="entry name" value="PLDc_CLS_2"/>
    <property type="match status" value="1"/>
</dbReference>
<dbReference type="FunFam" id="3.30.870.10:FF:000014">
    <property type="entry name" value="Cardiolipin synthase"/>
    <property type="match status" value="1"/>
</dbReference>
<dbReference type="FunFam" id="3.30.870.10:FF:000021">
    <property type="entry name" value="Cardiolipin synthase"/>
    <property type="match status" value="1"/>
</dbReference>
<dbReference type="Gene3D" id="3.30.870.10">
    <property type="entry name" value="Endonuclease Chain A"/>
    <property type="match status" value="2"/>
</dbReference>
<dbReference type="HAMAP" id="MF_01916">
    <property type="entry name" value="Cardiolipin_synth_Cls"/>
    <property type="match status" value="1"/>
</dbReference>
<dbReference type="InterPro" id="IPR030874">
    <property type="entry name" value="Cardiolipin_synth_Firmi"/>
</dbReference>
<dbReference type="InterPro" id="IPR022924">
    <property type="entry name" value="Cardiolipin_synthase"/>
</dbReference>
<dbReference type="InterPro" id="IPR027379">
    <property type="entry name" value="CLS_N"/>
</dbReference>
<dbReference type="InterPro" id="IPR025202">
    <property type="entry name" value="PLD-like_dom"/>
</dbReference>
<dbReference type="InterPro" id="IPR001736">
    <property type="entry name" value="PLipase_D/transphosphatidylase"/>
</dbReference>
<dbReference type="NCBIfam" id="TIGR04265">
    <property type="entry name" value="bac_cardiolipin"/>
    <property type="match status" value="1"/>
</dbReference>
<dbReference type="PANTHER" id="PTHR21248">
    <property type="entry name" value="CARDIOLIPIN SYNTHASE"/>
    <property type="match status" value="1"/>
</dbReference>
<dbReference type="PANTHER" id="PTHR21248:SF22">
    <property type="entry name" value="PHOSPHOLIPASE D"/>
    <property type="match status" value="1"/>
</dbReference>
<dbReference type="Pfam" id="PF13091">
    <property type="entry name" value="PLDc_2"/>
    <property type="match status" value="2"/>
</dbReference>
<dbReference type="Pfam" id="PF13396">
    <property type="entry name" value="PLDc_N"/>
    <property type="match status" value="1"/>
</dbReference>
<dbReference type="SMART" id="SM00155">
    <property type="entry name" value="PLDc"/>
    <property type="match status" value="2"/>
</dbReference>
<dbReference type="SUPFAM" id="SSF56024">
    <property type="entry name" value="Phospholipase D/nuclease"/>
    <property type="match status" value="2"/>
</dbReference>
<dbReference type="PROSITE" id="PS50035">
    <property type="entry name" value="PLD"/>
    <property type="match status" value="2"/>
</dbReference>
<sequence length="482" mass="55462">MGLLAYLLVILLILNVFFAAVTVFLERRDTSATWAWLLVLTFVPIFGFIIYLIFGRKLSGKKIFDWKGQEKIGIQESTANQIEMIRQKEFPFSDPNVKKHRDLIYLLLVNDGAILTQDNEVELFIDGHEKFDALIADIEKAKDHIHLIYYIFHSDELGNRLMRVLERKAAEGLNVKIIYDAMGSRTTKKSFFRTFEKNGGLVRPFFPSKLPLINFRLNYRNHRKLAIIDGDVGYIGGFNIGDEYLGRSKKFGYWRDTHLRVHGKAVYAMQTRFIMDWNSASSTHKIDYKARYFPTFHGKGHTSMQIVSSGPDSEWQQIKNGYIKMINAAKKTIYLQSPYFIPDASLLEAIKIAALSGVDVRVMIPNKPDHAFVYRATTNYAGELMETGAKIFIYDNGFIHAKTLVVDGEIASVGTANMDFRSFRLNFEVNAFIYEKKMVQKLEDAFLEDILKSYQLTPELYAKRSLWIKFKEAVSRLLSPIL</sequence>
<protein>
    <recommendedName>
        <fullName evidence="1">Cardiolipin synthase</fullName>
        <shortName evidence="1">CL synthase</shortName>
        <ecNumber evidence="1">2.7.8.-</ecNumber>
    </recommendedName>
</protein>
<name>CLS_LISIN</name>
<organism>
    <name type="scientific">Listeria innocua serovar 6a (strain ATCC BAA-680 / CLIP 11262)</name>
    <dbReference type="NCBI Taxonomy" id="272626"/>
    <lineage>
        <taxon>Bacteria</taxon>
        <taxon>Bacillati</taxon>
        <taxon>Bacillota</taxon>
        <taxon>Bacilli</taxon>
        <taxon>Bacillales</taxon>
        <taxon>Listeriaceae</taxon>
        <taxon>Listeria</taxon>
    </lineage>
</organism>
<evidence type="ECO:0000255" key="1">
    <source>
        <dbReference type="HAMAP-Rule" id="MF_01916"/>
    </source>
</evidence>
<gene>
    <name type="primary">cls</name>
    <name type="ordered locus">lin2646</name>
</gene>
<accession>Q927Z0</accession>
<feature type="chain" id="PRO_0000201256" description="Cardiolipin synthase">
    <location>
        <begin position="1"/>
        <end position="482"/>
    </location>
</feature>
<feature type="transmembrane region" description="Helical" evidence="1">
    <location>
        <begin position="4"/>
        <end position="24"/>
    </location>
</feature>
<feature type="transmembrane region" description="Helical" evidence="1">
    <location>
        <begin position="34"/>
        <end position="54"/>
    </location>
</feature>
<feature type="domain" description="PLD phosphodiesterase 1" evidence="1">
    <location>
        <begin position="217"/>
        <end position="244"/>
    </location>
</feature>
<feature type="domain" description="PLD phosphodiesterase 2" evidence="1">
    <location>
        <begin position="395"/>
        <end position="422"/>
    </location>
</feature>
<feature type="active site" evidence="1">
    <location>
        <position position="222"/>
    </location>
</feature>
<feature type="active site" evidence="1">
    <location>
        <position position="224"/>
    </location>
</feature>
<feature type="active site" evidence="1">
    <location>
        <position position="229"/>
    </location>
</feature>
<feature type="active site" evidence="1">
    <location>
        <position position="400"/>
    </location>
</feature>
<feature type="active site" evidence="1">
    <location>
        <position position="402"/>
    </location>
</feature>
<feature type="active site" evidence="1">
    <location>
        <position position="407"/>
    </location>
</feature>
<comment type="function">
    <text evidence="1">Catalyzes the reversible phosphatidyl group transfer from one phosphatidylglycerol molecule to another to form cardiolipin (CL) (diphosphatidylglycerol) and glycerol.</text>
</comment>
<comment type="catalytic activity">
    <reaction evidence="1">
        <text>2 a 1,2-diacyl-sn-glycero-3-phospho-(1'-sn-glycerol) = a cardiolipin + glycerol</text>
        <dbReference type="Rhea" id="RHEA:31451"/>
        <dbReference type="ChEBI" id="CHEBI:17754"/>
        <dbReference type="ChEBI" id="CHEBI:62237"/>
        <dbReference type="ChEBI" id="CHEBI:64716"/>
    </reaction>
</comment>
<comment type="subcellular location">
    <subcellularLocation>
        <location evidence="1">Cell membrane</location>
        <topology evidence="1">Multi-pass membrane protein</topology>
    </subcellularLocation>
</comment>
<comment type="similarity">
    <text evidence="1">Belongs to the phospholipase D family. Cardiolipin synthase subfamily.</text>
</comment>